<gene>
    <name evidence="1" type="primary">trpA</name>
    <name type="ordered locus">Clim_0501</name>
</gene>
<dbReference type="EC" id="4.2.1.20" evidence="1"/>
<dbReference type="EMBL" id="CP001097">
    <property type="protein sequence ID" value="ACD89594.1"/>
    <property type="molecule type" value="Genomic_DNA"/>
</dbReference>
<dbReference type="RefSeq" id="WP_012465475.1">
    <property type="nucleotide sequence ID" value="NC_010803.1"/>
</dbReference>
<dbReference type="SMR" id="B3EGF7"/>
<dbReference type="STRING" id="290315.Clim_0501"/>
<dbReference type="KEGG" id="cli:Clim_0501"/>
<dbReference type="eggNOG" id="COG0159">
    <property type="taxonomic scope" value="Bacteria"/>
</dbReference>
<dbReference type="HOGENOM" id="CLU_016734_0_0_10"/>
<dbReference type="OrthoDB" id="9804578at2"/>
<dbReference type="UniPathway" id="UPA00035">
    <property type="reaction ID" value="UER00044"/>
</dbReference>
<dbReference type="Proteomes" id="UP000008841">
    <property type="component" value="Chromosome"/>
</dbReference>
<dbReference type="GO" id="GO:0005829">
    <property type="term" value="C:cytosol"/>
    <property type="evidence" value="ECO:0007669"/>
    <property type="project" value="TreeGrafter"/>
</dbReference>
<dbReference type="GO" id="GO:0004834">
    <property type="term" value="F:tryptophan synthase activity"/>
    <property type="evidence" value="ECO:0007669"/>
    <property type="project" value="UniProtKB-UniRule"/>
</dbReference>
<dbReference type="CDD" id="cd04724">
    <property type="entry name" value="Tryptophan_synthase_alpha"/>
    <property type="match status" value="1"/>
</dbReference>
<dbReference type="Gene3D" id="3.20.20.70">
    <property type="entry name" value="Aldolase class I"/>
    <property type="match status" value="1"/>
</dbReference>
<dbReference type="HAMAP" id="MF_00131">
    <property type="entry name" value="Trp_synth_alpha"/>
    <property type="match status" value="1"/>
</dbReference>
<dbReference type="InterPro" id="IPR013785">
    <property type="entry name" value="Aldolase_TIM"/>
</dbReference>
<dbReference type="InterPro" id="IPR011060">
    <property type="entry name" value="RibuloseP-bd_barrel"/>
</dbReference>
<dbReference type="InterPro" id="IPR018204">
    <property type="entry name" value="Trp_synthase_alpha_AS"/>
</dbReference>
<dbReference type="InterPro" id="IPR002028">
    <property type="entry name" value="Trp_synthase_suA"/>
</dbReference>
<dbReference type="NCBIfam" id="TIGR00262">
    <property type="entry name" value="trpA"/>
    <property type="match status" value="1"/>
</dbReference>
<dbReference type="PANTHER" id="PTHR43406:SF1">
    <property type="entry name" value="TRYPTOPHAN SYNTHASE ALPHA CHAIN, CHLOROPLASTIC"/>
    <property type="match status" value="1"/>
</dbReference>
<dbReference type="PANTHER" id="PTHR43406">
    <property type="entry name" value="TRYPTOPHAN SYNTHASE, ALPHA CHAIN"/>
    <property type="match status" value="1"/>
</dbReference>
<dbReference type="Pfam" id="PF00290">
    <property type="entry name" value="Trp_syntA"/>
    <property type="match status" value="1"/>
</dbReference>
<dbReference type="SUPFAM" id="SSF51366">
    <property type="entry name" value="Ribulose-phoshate binding barrel"/>
    <property type="match status" value="1"/>
</dbReference>
<dbReference type="PROSITE" id="PS00167">
    <property type="entry name" value="TRP_SYNTHASE_ALPHA"/>
    <property type="match status" value="1"/>
</dbReference>
<sequence length="267" mass="28894">MKQNRIASLVEQDKKLLVAYYMPEYPVAGATLPVLEALQENGADIIELGIPFSDPVGDGPVIQEAAQRAIRNGVTVKNLLETVHNARRGAGCKAITVPIILMGYCNPLIAYGGDCFLNDAVEAGVDGLLLPDLPPEEAEDFLERAKSFGLTVVFLISPVTPPDRIEMIDSLSTDFSYCLAVNATTGTAKLAGEDADAAIEEYLKRVRQHTRKKFVVGFGIRDKARVMQMWKLADGAVVGTALLQRLAAAHTPGETARLAGEFWQALR</sequence>
<reference key="1">
    <citation type="submission" date="2008-05" db="EMBL/GenBank/DDBJ databases">
        <title>Complete sequence of Chlorobium limicola DSM 245.</title>
        <authorList>
            <consortium name="US DOE Joint Genome Institute"/>
            <person name="Lucas S."/>
            <person name="Copeland A."/>
            <person name="Lapidus A."/>
            <person name="Glavina del Rio T."/>
            <person name="Dalin E."/>
            <person name="Tice H."/>
            <person name="Bruce D."/>
            <person name="Goodwin L."/>
            <person name="Pitluck S."/>
            <person name="Schmutz J."/>
            <person name="Larimer F."/>
            <person name="Land M."/>
            <person name="Hauser L."/>
            <person name="Kyrpides N."/>
            <person name="Ovchinnikova G."/>
            <person name="Zhao F."/>
            <person name="Li T."/>
            <person name="Liu Z."/>
            <person name="Overmann J."/>
            <person name="Bryant D.A."/>
            <person name="Richardson P."/>
        </authorList>
    </citation>
    <scope>NUCLEOTIDE SEQUENCE [LARGE SCALE GENOMIC DNA]</scope>
    <source>
        <strain>DSM 245 / NBRC 103803 / 6330</strain>
    </source>
</reference>
<feature type="chain" id="PRO_1000095702" description="Tryptophan synthase alpha chain">
    <location>
        <begin position="1"/>
        <end position="267"/>
    </location>
</feature>
<feature type="active site" description="Proton acceptor" evidence="1">
    <location>
        <position position="47"/>
    </location>
</feature>
<feature type="active site" description="Proton acceptor" evidence="1">
    <location>
        <position position="58"/>
    </location>
</feature>
<comment type="function">
    <text evidence="1">The alpha subunit is responsible for the aldol cleavage of indoleglycerol phosphate to indole and glyceraldehyde 3-phosphate.</text>
</comment>
<comment type="catalytic activity">
    <reaction evidence="1">
        <text>(1S,2R)-1-C-(indol-3-yl)glycerol 3-phosphate + L-serine = D-glyceraldehyde 3-phosphate + L-tryptophan + H2O</text>
        <dbReference type="Rhea" id="RHEA:10532"/>
        <dbReference type="ChEBI" id="CHEBI:15377"/>
        <dbReference type="ChEBI" id="CHEBI:33384"/>
        <dbReference type="ChEBI" id="CHEBI:57912"/>
        <dbReference type="ChEBI" id="CHEBI:58866"/>
        <dbReference type="ChEBI" id="CHEBI:59776"/>
        <dbReference type="EC" id="4.2.1.20"/>
    </reaction>
</comment>
<comment type="pathway">
    <text evidence="1">Amino-acid biosynthesis; L-tryptophan biosynthesis; L-tryptophan from chorismate: step 5/5.</text>
</comment>
<comment type="subunit">
    <text evidence="1">Tetramer of two alpha and two beta chains.</text>
</comment>
<comment type="similarity">
    <text evidence="1">Belongs to the TrpA family.</text>
</comment>
<keyword id="KW-0028">Amino-acid biosynthesis</keyword>
<keyword id="KW-0057">Aromatic amino acid biosynthesis</keyword>
<keyword id="KW-0456">Lyase</keyword>
<keyword id="KW-0822">Tryptophan biosynthesis</keyword>
<name>TRPA_CHLL2</name>
<accession>B3EGF7</accession>
<evidence type="ECO:0000255" key="1">
    <source>
        <dbReference type="HAMAP-Rule" id="MF_00131"/>
    </source>
</evidence>
<proteinExistence type="inferred from homology"/>
<organism>
    <name type="scientific">Chlorobium limicola (strain DSM 245 / NBRC 103803 / 6330)</name>
    <dbReference type="NCBI Taxonomy" id="290315"/>
    <lineage>
        <taxon>Bacteria</taxon>
        <taxon>Pseudomonadati</taxon>
        <taxon>Chlorobiota</taxon>
        <taxon>Chlorobiia</taxon>
        <taxon>Chlorobiales</taxon>
        <taxon>Chlorobiaceae</taxon>
        <taxon>Chlorobium/Pelodictyon group</taxon>
        <taxon>Chlorobium</taxon>
    </lineage>
</organism>
<protein>
    <recommendedName>
        <fullName evidence="1">Tryptophan synthase alpha chain</fullName>
        <ecNumber evidence="1">4.2.1.20</ecNumber>
    </recommendedName>
</protein>